<organism>
    <name type="scientific">Enterobacteria phage T3</name>
    <name type="common">Bacteriophage T3</name>
    <dbReference type="NCBI Taxonomy" id="10759"/>
    <lineage>
        <taxon>Viruses</taxon>
        <taxon>Duplodnaviria</taxon>
        <taxon>Heunggongvirae</taxon>
        <taxon>Uroviricota</taxon>
        <taxon>Caudoviricetes</taxon>
        <taxon>Autographiviridae</taxon>
        <taxon>Studiervirinae</taxon>
        <taxon>Teetrevirus</taxon>
        <taxon>Teetrevirus T3</taxon>
    </lineage>
</organism>
<feature type="chain" id="PRO_0000106508" description="Uncharacterized gene 6.5 protein">
    <location>
        <begin position="1"/>
        <end position="81"/>
    </location>
</feature>
<proteinExistence type="predicted"/>
<gene>
    <name type="primary">6.5</name>
</gene>
<accession>P20329</accession>
<protein>
    <recommendedName>
        <fullName>Uncharacterized gene 6.5 protein</fullName>
    </recommendedName>
</protein>
<dbReference type="EMBL" id="X17255">
    <property type="protein sequence ID" value="CAA35149.1"/>
    <property type="molecule type" value="Genomic_DNA"/>
</dbReference>
<dbReference type="PIR" id="S07518">
    <property type="entry name" value="S07518"/>
</dbReference>
<dbReference type="RefSeq" id="NP_523329.1">
    <property type="nucleotide sequence ID" value="NC_003298.1"/>
</dbReference>
<dbReference type="SMR" id="P20329"/>
<dbReference type="KEGG" id="vg:927427"/>
<dbReference type="OrthoDB" id="26865at10239"/>
<dbReference type="InterPro" id="IPR020121">
    <property type="entry name" value="Phage_T7-like_6.5"/>
</dbReference>
<dbReference type="Pfam" id="PF10911">
    <property type="entry name" value="T7-like_Y65"/>
    <property type="match status" value="1"/>
</dbReference>
<name>Y65_BPT3</name>
<sequence>MLQPINHVLTHPDDIPSMPRAAKEYLQVRFNQAYVMESGEYRALRAAGYSESFIAGVMHGLYLASRTLDEIEVRKEQLRQE</sequence>
<reference key="1">
    <citation type="journal article" date="1989" name="J. Mol. Biol.">
        <title>Sequence of bacteriophage T3 DNA from gene 2.5 through gene 9.</title>
        <authorList>
            <person name="Beck P.J."/>
            <person name="Gonzalez S."/>
            <person name="Ward C.L."/>
            <person name="Molineux I.J."/>
        </authorList>
    </citation>
    <scope>NUCLEOTIDE SEQUENCE [GENOMIC DNA]</scope>
    <source>
        <strain>Luria</strain>
    </source>
</reference>
<organismHost>
    <name type="scientific">Escherichia coli</name>
    <dbReference type="NCBI Taxonomy" id="562"/>
</organismHost>